<protein>
    <recommendedName>
        <fullName>Spermatid-specific protein S2</fullName>
    </recommendedName>
    <alternativeName>
        <fullName>Basic nuclear protein S2</fullName>
    </alternativeName>
</protein>
<reference key="1">
    <citation type="journal article" date="1989" name="Eur. J. Biochem.">
        <title>Nuclear basic protein transition during sperm differentiation. Primary structure of the spermatid-specific protein S2 from the dog-fish Scylliorhinus caniculus.</title>
        <authorList>
            <person name="Chauviere M."/>
            <person name="Martinage A."/>
            <person name="Briand G."/>
            <person name="Sautiere P."/>
            <person name="Chevaillier P."/>
        </authorList>
    </citation>
    <scope>PROTEIN SEQUENCE</scope>
</reference>
<keyword id="KW-0158">Chromosome</keyword>
<keyword id="KW-0217">Developmental protein</keyword>
<keyword id="KW-0221">Differentiation</keyword>
<keyword id="KW-0903">Direct protein sequencing</keyword>
<keyword id="KW-0238">DNA-binding</keyword>
<keyword id="KW-0544">Nucleosome core</keyword>
<keyword id="KW-0539">Nucleus</keyword>
<keyword id="KW-0744">Spermatogenesis</keyword>
<organism>
    <name type="scientific">Scyliorhinus canicula</name>
    <name type="common">Small-spotted catshark</name>
    <name type="synonym">Squalus canicula</name>
    <dbReference type="NCBI Taxonomy" id="7830"/>
    <lineage>
        <taxon>Eukaryota</taxon>
        <taxon>Metazoa</taxon>
        <taxon>Chordata</taxon>
        <taxon>Craniata</taxon>
        <taxon>Vertebrata</taxon>
        <taxon>Chondrichthyes</taxon>
        <taxon>Elasmobranchii</taxon>
        <taxon>Galeomorphii</taxon>
        <taxon>Galeoidea</taxon>
        <taxon>Carcharhiniformes</taxon>
        <taxon>Scyliorhinidae</taxon>
        <taxon>Scyliorhinus</taxon>
    </lineage>
</organism>
<accession>P11020</accession>
<name>SSS2_SCYCA</name>
<sequence>VKSRYHQRQYRARKRYAKARRTKKPKRRPKPPRKLRYAPSKKQPKIMKLKLDNEVDNTLKAKNKSLNEALKNRLSLRKHV</sequence>
<evidence type="ECO:0000256" key="1">
    <source>
        <dbReference type="SAM" id="MobiDB-lite"/>
    </source>
</evidence>
<comment type="function">
    <text>Involved in nuclear basic protein transition: histones are replaced by spermatid specific proteins which are themselves replaced by protamines in late spermatids.</text>
</comment>
<comment type="subcellular location">
    <subcellularLocation>
        <location>Nucleus</location>
    </subcellularLocation>
    <subcellularLocation>
        <location>Chromosome</location>
    </subcellularLocation>
</comment>
<comment type="miscellaneous">
    <text>N-terminal half is highly basic, while C-terminal part is acid.</text>
</comment>
<proteinExistence type="evidence at protein level"/>
<dbReference type="PIR" id="S03560">
    <property type="entry name" value="S03560"/>
</dbReference>
<dbReference type="SMR" id="P11020"/>
<dbReference type="GO" id="GO:0000786">
    <property type="term" value="C:nucleosome"/>
    <property type="evidence" value="ECO:0007669"/>
    <property type="project" value="UniProtKB-KW"/>
</dbReference>
<dbReference type="GO" id="GO:0005634">
    <property type="term" value="C:nucleus"/>
    <property type="evidence" value="ECO:0007669"/>
    <property type="project" value="UniProtKB-SubCell"/>
</dbReference>
<dbReference type="GO" id="GO:0003677">
    <property type="term" value="F:DNA binding"/>
    <property type="evidence" value="ECO:0007669"/>
    <property type="project" value="UniProtKB-KW"/>
</dbReference>
<dbReference type="GO" id="GO:0030154">
    <property type="term" value="P:cell differentiation"/>
    <property type="evidence" value="ECO:0007669"/>
    <property type="project" value="UniProtKB-KW"/>
</dbReference>
<dbReference type="GO" id="GO:0007283">
    <property type="term" value="P:spermatogenesis"/>
    <property type="evidence" value="ECO:0007669"/>
    <property type="project" value="UniProtKB-KW"/>
</dbReference>
<feature type="chain" id="PRO_0000106633" description="Spermatid-specific protein S2">
    <location>
        <begin position="1"/>
        <end position="80"/>
    </location>
</feature>
<feature type="region of interest" description="Disordered" evidence="1">
    <location>
        <begin position="1"/>
        <end position="44"/>
    </location>
</feature>
<feature type="compositionally biased region" description="Basic residues" evidence="1">
    <location>
        <begin position="1"/>
        <end position="36"/>
    </location>
</feature>